<proteinExistence type="inferred from homology"/>
<reference key="1">
    <citation type="journal article" date="2006" name="Genome Biol.">
        <title>The genome of Rhizobium leguminosarum has recognizable core and accessory components.</title>
        <authorList>
            <person name="Young J.P.W."/>
            <person name="Crossman L.C."/>
            <person name="Johnston A.W.B."/>
            <person name="Thomson N.R."/>
            <person name="Ghazoui Z.F."/>
            <person name="Hull K.H."/>
            <person name="Wexler M."/>
            <person name="Curson A.R.J."/>
            <person name="Todd J.D."/>
            <person name="Poole P.S."/>
            <person name="Mauchline T.H."/>
            <person name="East A.K."/>
            <person name="Quail M.A."/>
            <person name="Churcher C."/>
            <person name="Arrowsmith C."/>
            <person name="Cherevach I."/>
            <person name="Chillingworth T."/>
            <person name="Clarke K."/>
            <person name="Cronin A."/>
            <person name="Davis P."/>
            <person name="Fraser A."/>
            <person name="Hance Z."/>
            <person name="Hauser H."/>
            <person name="Jagels K."/>
            <person name="Moule S."/>
            <person name="Mungall K."/>
            <person name="Norbertczak H."/>
            <person name="Rabbinowitsch E."/>
            <person name="Sanders M."/>
            <person name="Simmonds M."/>
            <person name="Whitehead S."/>
            <person name="Parkhill J."/>
        </authorList>
    </citation>
    <scope>NUCLEOTIDE SEQUENCE [LARGE SCALE GENOMIC DNA]</scope>
    <source>
        <strain>DSM 114642 / LMG 32736 / 3841</strain>
    </source>
</reference>
<protein>
    <recommendedName>
        <fullName evidence="1">UPF0314 protein RL4541</fullName>
    </recommendedName>
</protein>
<comment type="subcellular location">
    <subcellularLocation>
        <location evidence="1">Cell membrane</location>
        <topology evidence="1">Multi-pass membrane protein</topology>
    </subcellularLocation>
</comment>
<comment type="similarity">
    <text evidence="1">Belongs to the UPF0314 family.</text>
</comment>
<accession>Q1MAL3</accession>
<dbReference type="EMBL" id="AM236080">
    <property type="protein sequence ID" value="CAK10025.1"/>
    <property type="molecule type" value="Genomic_DNA"/>
</dbReference>
<dbReference type="RefSeq" id="WP_011653899.1">
    <property type="nucleotide sequence ID" value="NC_008380.1"/>
</dbReference>
<dbReference type="EnsemblBacteria" id="CAK10025">
    <property type="protein sequence ID" value="CAK10025"/>
    <property type="gene ID" value="RL4541"/>
</dbReference>
<dbReference type="KEGG" id="rle:RL4541"/>
<dbReference type="eggNOG" id="ENOG502ZZUX">
    <property type="taxonomic scope" value="Bacteria"/>
</dbReference>
<dbReference type="HOGENOM" id="CLU_1395337_0_0_5"/>
<dbReference type="Proteomes" id="UP000006575">
    <property type="component" value="Chromosome"/>
</dbReference>
<dbReference type="GO" id="GO:0005886">
    <property type="term" value="C:plasma membrane"/>
    <property type="evidence" value="ECO:0007669"/>
    <property type="project" value="UniProtKB-SubCell"/>
</dbReference>
<dbReference type="HAMAP" id="MF_01514">
    <property type="entry name" value="UPF0314"/>
    <property type="match status" value="1"/>
</dbReference>
<dbReference type="InterPro" id="IPR019691">
    <property type="entry name" value="DUF2585"/>
</dbReference>
<dbReference type="NCBIfam" id="NF002099">
    <property type="entry name" value="PRK00944.1"/>
    <property type="match status" value="1"/>
</dbReference>
<dbReference type="Pfam" id="PF10755">
    <property type="entry name" value="DUF2585"/>
    <property type="match status" value="1"/>
</dbReference>
<organism>
    <name type="scientific">Rhizobium johnstonii (strain DSM 114642 / LMG 32736 / 3841)</name>
    <name type="common">Rhizobium leguminosarum bv. viciae</name>
    <dbReference type="NCBI Taxonomy" id="216596"/>
    <lineage>
        <taxon>Bacteria</taxon>
        <taxon>Pseudomonadati</taxon>
        <taxon>Pseudomonadota</taxon>
        <taxon>Alphaproteobacteria</taxon>
        <taxon>Hyphomicrobiales</taxon>
        <taxon>Rhizobiaceae</taxon>
        <taxon>Rhizobium/Agrobacterium group</taxon>
        <taxon>Rhizobium</taxon>
        <taxon>Rhizobium johnstonii</taxon>
    </lineage>
</organism>
<evidence type="ECO:0000255" key="1">
    <source>
        <dbReference type="HAMAP-Rule" id="MF_01514"/>
    </source>
</evidence>
<gene>
    <name type="ordered locus">RL4541</name>
</gene>
<keyword id="KW-1003">Cell membrane</keyword>
<keyword id="KW-0472">Membrane</keyword>
<keyword id="KW-0812">Transmembrane</keyword>
<keyword id="KW-1133">Transmembrane helix</keyword>
<sequence length="195" mass="21984">MSAVDVESRVRHQNFWFVACFAVLVIQIAVEYMMGRVPICACGYVKLWEGGVNTSGNSQHLSDWYTPSHIIHGFLFYGLAHLILRRKPLAAKLLLALVIESGWELLENSPLIIDRYRTATIALDYYGDSILNSAMDTVFMCVGFFFARRAPVALTVAIATFFEIFTGYIIRDNLTLNVVMLIWPVEAIKVWQGGV</sequence>
<feature type="chain" id="PRO_0000248041" description="UPF0314 protein RL4541">
    <location>
        <begin position="1"/>
        <end position="195"/>
    </location>
</feature>
<feature type="transmembrane region" description="Helical" evidence="1">
    <location>
        <begin position="15"/>
        <end position="35"/>
    </location>
</feature>
<feature type="transmembrane region" description="Helical" evidence="1">
    <location>
        <begin position="64"/>
        <end position="84"/>
    </location>
</feature>
<feature type="transmembrane region" description="Helical" evidence="1">
    <location>
        <begin position="127"/>
        <end position="147"/>
    </location>
</feature>
<feature type="transmembrane region" description="Helical" evidence="1">
    <location>
        <begin position="150"/>
        <end position="170"/>
    </location>
</feature>
<name>Y4541_RHIJ3</name>